<comment type="function">
    <text evidence="1">Allows the formation of correctly charged Asn-tRNA(Asn) or Gln-tRNA(Gln) through the transamidation of misacylated Asp-tRNA(Asn) or Glu-tRNA(Gln) in organisms which lack either or both of asparaginyl-tRNA or glutaminyl-tRNA synthetases. The reaction takes place in the presence of glutamine and ATP through an activated phospho-Asp-tRNA(Asn) or phospho-Glu-tRNA(Gln).</text>
</comment>
<comment type="catalytic activity">
    <reaction evidence="1">
        <text>L-glutamyl-tRNA(Gln) + L-glutamine + ATP + H2O = L-glutaminyl-tRNA(Gln) + L-glutamate + ADP + phosphate + H(+)</text>
        <dbReference type="Rhea" id="RHEA:17521"/>
        <dbReference type="Rhea" id="RHEA-COMP:9681"/>
        <dbReference type="Rhea" id="RHEA-COMP:9684"/>
        <dbReference type="ChEBI" id="CHEBI:15377"/>
        <dbReference type="ChEBI" id="CHEBI:15378"/>
        <dbReference type="ChEBI" id="CHEBI:29985"/>
        <dbReference type="ChEBI" id="CHEBI:30616"/>
        <dbReference type="ChEBI" id="CHEBI:43474"/>
        <dbReference type="ChEBI" id="CHEBI:58359"/>
        <dbReference type="ChEBI" id="CHEBI:78520"/>
        <dbReference type="ChEBI" id="CHEBI:78521"/>
        <dbReference type="ChEBI" id="CHEBI:456216"/>
    </reaction>
</comment>
<comment type="catalytic activity">
    <reaction evidence="1">
        <text>L-aspartyl-tRNA(Asn) + L-glutamine + ATP + H2O = L-asparaginyl-tRNA(Asn) + L-glutamate + ADP + phosphate + 2 H(+)</text>
        <dbReference type="Rhea" id="RHEA:14513"/>
        <dbReference type="Rhea" id="RHEA-COMP:9674"/>
        <dbReference type="Rhea" id="RHEA-COMP:9677"/>
        <dbReference type="ChEBI" id="CHEBI:15377"/>
        <dbReference type="ChEBI" id="CHEBI:15378"/>
        <dbReference type="ChEBI" id="CHEBI:29985"/>
        <dbReference type="ChEBI" id="CHEBI:30616"/>
        <dbReference type="ChEBI" id="CHEBI:43474"/>
        <dbReference type="ChEBI" id="CHEBI:58359"/>
        <dbReference type="ChEBI" id="CHEBI:78515"/>
        <dbReference type="ChEBI" id="CHEBI:78516"/>
        <dbReference type="ChEBI" id="CHEBI:456216"/>
    </reaction>
</comment>
<comment type="subunit">
    <text evidence="1">Heterotrimer of A, B and C subunits.</text>
</comment>
<comment type="similarity">
    <text evidence="1">Belongs to the GatC family.</text>
</comment>
<gene>
    <name evidence="1" type="primary">gatC</name>
    <name type="ordered locus">YG5714_1253</name>
</gene>
<protein>
    <recommendedName>
        <fullName evidence="1">Aspartyl/glutamyl-tRNA(Asn/Gln) amidotransferase subunit C</fullName>
        <shortName evidence="1">Asp/Glu-ADT subunit C</shortName>
        <ecNumber evidence="1">6.3.5.-</ecNumber>
    </recommendedName>
</protein>
<proteinExistence type="inferred from homology"/>
<sequence length="97" mass="11396">MKIEVNKNLIKHLENLSLIQLSQNEEKMLENDITNIIKFFEKINELDLSNVEPLFHPLPQGRLRKDTPRDPLDRENALKNVKRKENGYIVGPRTYGE</sequence>
<dbReference type="EC" id="6.3.5.-" evidence="1"/>
<dbReference type="EMBL" id="CP001403">
    <property type="protein sequence ID" value="ACP45519.1"/>
    <property type="molecule type" value="Genomic_DNA"/>
</dbReference>
<dbReference type="RefSeq" id="WP_012711275.1">
    <property type="nucleotide sequence ID" value="NC_012622.1"/>
</dbReference>
<dbReference type="SMR" id="C3NDY0"/>
<dbReference type="GeneID" id="84061583"/>
<dbReference type="KEGG" id="siy:YG5714_1253"/>
<dbReference type="HOGENOM" id="CLU_105899_4_1_2"/>
<dbReference type="Proteomes" id="UP000002308">
    <property type="component" value="Chromosome"/>
</dbReference>
<dbReference type="GO" id="GO:0050566">
    <property type="term" value="F:asparaginyl-tRNA synthase (glutamine-hydrolyzing) activity"/>
    <property type="evidence" value="ECO:0007669"/>
    <property type="project" value="RHEA"/>
</dbReference>
<dbReference type="GO" id="GO:0005524">
    <property type="term" value="F:ATP binding"/>
    <property type="evidence" value="ECO:0007669"/>
    <property type="project" value="UniProtKB-KW"/>
</dbReference>
<dbReference type="GO" id="GO:0050567">
    <property type="term" value="F:glutaminyl-tRNA synthase (glutamine-hydrolyzing) activity"/>
    <property type="evidence" value="ECO:0007669"/>
    <property type="project" value="UniProtKB-UniRule"/>
</dbReference>
<dbReference type="GO" id="GO:0070681">
    <property type="term" value="P:glutaminyl-tRNAGln biosynthesis via transamidation"/>
    <property type="evidence" value="ECO:0007669"/>
    <property type="project" value="TreeGrafter"/>
</dbReference>
<dbReference type="GO" id="GO:0006450">
    <property type="term" value="P:regulation of translational fidelity"/>
    <property type="evidence" value="ECO:0007669"/>
    <property type="project" value="InterPro"/>
</dbReference>
<dbReference type="GO" id="GO:0006412">
    <property type="term" value="P:translation"/>
    <property type="evidence" value="ECO:0007669"/>
    <property type="project" value="UniProtKB-UniRule"/>
</dbReference>
<dbReference type="Gene3D" id="1.10.20.60">
    <property type="entry name" value="Glu-tRNAGln amidotransferase C subunit, N-terminal domain"/>
    <property type="match status" value="1"/>
</dbReference>
<dbReference type="HAMAP" id="MF_00122">
    <property type="entry name" value="GatC"/>
    <property type="match status" value="1"/>
</dbReference>
<dbReference type="InterPro" id="IPR036113">
    <property type="entry name" value="Asp/Glu-ADT_sf_sub_c"/>
</dbReference>
<dbReference type="InterPro" id="IPR003837">
    <property type="entry name" value="GatC"/>
</dbReference>
<dbReference type="NCBIfam" id="TIGR00135">
    <property type="entry name" value="gatC"/>
    <property type="match status" value="1"/>
</dbReference>
<dbReference type="NCBIfam" id="NF000684">
    <property type="entry name" value="PRK00034.3-4"/>
    <property type="match status" value="1"/>
</dbReference>
<dbReference type="PANTHER" id="PTHR15004">
    <property type="entry name" value="GLUTAMYL-TRNA(GLN) AMIDOTRANSFERASE SUBUNIT C, MITOCHONDRIAL"/>
    <property type="match status" value="1"/>
</dbReference>
<dbReference type="PANTHER" id="PTHR15004:SF0">
    <property type="entry name" value="GLUTAMYL-TRNA(GLN) AMIDOTRANSFERASE SUBUNIT C, MITOCHONDRIAL"/>
    <property type="match status" value="1"/>
</dbReference>
<dbReference type="Pfam" id="PF02686">
    <property type="entry name" value="GatC"/>
    <property type="match status" value="1"/>
</dbReference>
<dbReference type="SUPFAM" id="SSF141000">
    <property type="entry name" value="Glu-tRNAGln amidotransferase C subunit"/>
    <property type="match status" value="1"/>
</dbReference>
<organism>
    <name type="scientific">Saccharolobus islandicus (strain Y.G.57.14 / Yellowstone #1)</name>
    <name type="common">Sulfolobus islandicus</name>
    <dbReference type="NCBI Taxonomy" id="439386"/>
    <lineage>
        <taxon>Archaea</taxon>
        <taxon>Thermoproteota</taxon>
        <taxon>Thermoprotei</taxon>
        <taxon>Sulfolobales</taxon>
        <taxon>Sulfolobaceae</taxon>
        <taxon>Saccharolobus</taxon>
    </lineage>
</organism>
<reference key="1">
    <citation type="journal article" date="2009" name="Proc. Natl. Acad. Sci. U.S.A.">
        <title>Biogeography of the Sulfolobus islandicus pan-genome.</title>
        <authorList>
            <person name="Reno M.L."/>
            <person name="Held N.L."/>
            <person name="Fields C.J."/>
            <person name="Burke P.V."/>
            <person name="Whitaker R.J."/>
        </authorList>
    </citation>
    <scope>NUCLEOTIDE SEQUENCE [LARGE SCALE GENOMIC DNA]</scope>
    <source>
        <strain>Y.G.57.14 / Yellowstone #1</strain>
    </source>
</reference>
<name>GATC_SACI7</name>
<accession>C3NDY0</accession>
<evidence type="ECO:0000255" key="1">
    <source>
        <dbReference type="HAMAP-Rule" id="MF_00122"/>
    </source>
</evidence>
<evidence type="ECO:0000256" key="2">
    <source>
        <dbReference type="SAM" id="MobiDB-lite"/>
    </source>
</evidence>
<feature type="chain" id="PRO_1000203085" description="Aspartyl/glutamyl-tRNA(Asn/Gln) amidotransferase subunit C">
    <location>
        <begin position="1"/>
        <end position="97"/>
    </location>
</feature>
<feature type="region of interest" description="Disordered" evidence="2">
    <location>
        <begin position="58"/>
        <end position="78"/>
    </location>
</feature>
<feature type="compositionally biased region" description="Basic and acidic residues" evidence="2">
    <location>
        <begin position="63"/>
        <end position="77"/>
    </location>
</feature>
<keyword id="KW-0067">ATP-binding</keyword>
<keyword id="KW-0436">Ligase</keyword>
<keyword id="KW-0547">Nucleotide-binding</keyword>
<keyword id="KW-0648">Protein biosynthesis</keyword>